<accession>Q0TJF2</accession>
<proteinExistence type="inferred from homology"/>
<feature type="chain" id="PRO_1000065491" description="Uncharacterized MFS-type transporter YcaD">
    <location>
        <begin position="1"/>
        <end position="382"/>
    </location>
</feature>
<feature type="transmembrane region" description="Helical" evidence="1">
    <location>
        <begin position="14"/>
        <end position="34"/>
    </location>
</feature>
<feature type="transmembrane region" description="Helical" evidence="1">
    <location>
        <begin position="45"/>
        <end position="65"/>
    </location>
</feature>
<feature type="transmembrane region" description="Helical" evidence="1">
    <location>
        <begin position="79"/>
        <end position="99"/>
    </location>
</feature>
<feature type="transmembrane region" description="Helical" evidence="1">
    <location>
        <begin position="102"/>
        <end position="122"/>
    </location>
</feature>
<feature type="transmembrane region" description="Helical" evidence="1">
    <location>
        <begin position="131"/>
        <end position="151"/>
    </location>
</feature>
<feature type="transmembrane region" description="Helical" evidence="1">
    <location>
        <begin position="157"/>
        <end position="177"/>
    </location>
</feature>
<feature type="transmembrane region" description="Helical" evidence="1">
    <location>
        <begin position="204"/>
        <end position="224"/>
    </location>
</feature>
<feature type="transmembrane region" description="Helical" evidence="1">
    <location>
        <begin position="235"/>
        <end position="255"/>
    </location>
</feature>
<feature type="transmembrane region" description="Helical" evidence="1">
    <location>
        <begin position="270"/>
        <end position="290"/>
    </location>
</feature>
<feature type="transmembrane region" description="Helical" evidence="1">
    <location>
        <begin position="291"/>
        <end position="311"/>
    </location>
</feature>
<feature type="transmembrane region" description="Helical" evidence="1">
    <location>
        <begin position="325"/>
        <end position="345"/>
    </location>
</feature>
<feature type="transmembrane region" description="Helical" evidence="1">
    <location>
        <begin position="348"/>
        <end position="368"/>
    </location>
</feature>
<protein>
    <recommendedName>
        <fullName evidence="1">Uncharacterized MFS-type transporter YcaD</fullName>
    </recommendedName>
</protein>
<organism>
    <name type="scientific">Escherichia coli O6:K15:H31 (strain 536 / UPEC)</name>
    <dbReference type="NCBI Taxonomy" id="362663"/>
    <lineage>
        <taxon>Bacteria</taxon>
        <taxon>Pseudomonadati</taxon>
        <taxon>Pseudomonadota</taxon>
        <taxon>Gammaproteobacteria</taxon>
        <taxon>Enterobacterales</taxon>
        <taxon>Enterobacteriaceae</taxon>
        <taxon>Escherichia</taxon>
    </lineage>
</organism>
<sequence>MSTYTRPVMLLLSGLLLLTLAIAVLNTLVPLWLAQEHMSTWQVGVVSSSYFTGNLVGTLLTGYVIKRIGFNRSYYLASFIFAAGCAGLGLMIGFWSWLAWRFVAGIGCAMIWVVVESALMCSGTSRNRGRLLAAYMMVYYVGTFLGQLLVSKVSTELMSVLPWVTGLTLAGILPLLFTRVLNQQTENHDSTSITSMLKLRQARLGVNGCIISGIVLGSLYGLMPLYLNHKGVSNASIGFWMAVLVSAGILGQWPIGRLADKFGRLLVLRVQVFVVILGSIAMLSQAAMAPALFILGAAGFTLYPVAMAWACEKVEHHQLVAMNQALLLSYTVGSLLGPSFTAMLMQNFSDNLLFIMIASVSFIYLLMLLRNAGHTPKPVAHV</sequence>
<keyword id="KW-0997">Cell inner membrane</keyword>
<keyword id="KW-1003">Cell membrane</keyword>
<keyword id="KW-0472">Membrane</keyword>
<keyword id="KW-0812">Transmembrane</keyword>
<keyword id="KW-1133">Transmembrane helix</keyword>
<keyword id="KW-0813">Transport</keyword>
<evidence type="ECO:0000255" key="1">
    <source>
        <dbReference type="HAMAP-Rule" id="MF_01149"/>
    </source>
</evidence>
<reference key="1">
    <citation type="journal article" date="2006" name="Mol. Microbiol.">
        <title>Role of pathogenicity island-associated integrases in the genome plasticity of uropathogenic Escherichia coli strain 536.</title>
        <authorList>
            <person name="Hochhut B."/>
            <person name="Wilde C."/>
            <person name="Balling G."/>
            <person name="Middendorf B."/>
            <person name="Dobrindt U."/>
            <person name="Brzuszkiewicz E."/>
            <person name="Gottschalk G."/>
            <person name="Carniel E."/>
            <person name="Hacker J."/>
        </authorList>
    </citation>
    <scope>NUCLEOTIDE SEQUENCE [LARGE SCALE GENOMIC DNA]</scope>
    <source>
        <strain>536 / UPEC</strain>
    </source>
</reference>
<gene>
    <name evidence="1" type="primary">ycaD</name>
    <name type="ordered locus">ECP_0912</name>
</gene>
<name>YCAD_ECOL5</name>
<comment type="subcellular location">
    <subcellularLocation>
        <location evidence="1">Cell inner membrane</location>
        <topology evidence="1">Multi-pass membrane protein</topology>
    </subcellularLocation>
</comment>
<comment type="similarity">
    <text evidence="1">Belongs to the major facilitator superfamily. YcaD (TC 2.A.1.26) family.</text>
</comment>
<dbReference type="EMBL" id="CP000247">
    <property type="protein sequence ID" value="ABG68927.1"/>
    <property type="molecule type" value="Genomic_DNA"/>
</dbReference>
<dbReference type="RefSeq" id="WP_000109283.1">
    <property type="nucleotide sequence ID" value="NC_008253.1"/>
</dbReference>
<dbReference type="SMR" id="Q0TJF2"/>
<dbReference type="KEGG" id="ecp:ECP_0912"/>
<dbReference type="HOGENOM" id="CLU_035018_1_2_6"/>
<dbReference type="Proteomes" id="UP000009182">
    <property type="component" value="Chromosome"/>
</dbReference>
<dbReference type="GO" id="GO:0005886">
    <property type="term" value="C:plasma membrane"/>
    <property type="evidence" value="ECO:0007669"/>
    <property type="project" value="UniProtKB-SubCell"/>
</dbReference>
<dbReference type="GO" id="GO:0022857">
    <property type="term" value="F:transmembrane transporter activity"/>
    <property type="evidence" value="ECO:0007669"/>
    <property type="project" value="UniProtKB-UniRule"/>
</dbReference>
<dbReference type="CDD" id="cd17477">
    <property type="entry name" value="MFS_YcaD_like"/>
    <property type="match status" value="1"/>
</dbReference>
<dbReference type="FunFam" id="1.20.1250.20:FF:000041">
    <property type="entry name" value="Uncharacterized MFS-type transporter YcaD"/>
    <property type="match status" value="1"/>
</dbReference>
<dbReference type="FunFam" id="1.20.1250.20:FF:000066">
    <property type="entry name" value="Uncharacterized MFS-type transporter YcaD"/>
    <property type="match status" value="1"/>
</dbReference>
<dbReference type="Gene3D" id="1.20.1250.20">
    <property type="entry name" value="MFS general substrate transporter like domains"/>
    <property type="match status" value="2"/>
</dbReference>
<dbReference type="HAMAP" id="MF_01149">
    <property type="entry name" value="MFS_YcaD"/>
    <property type="match status" value="1"/>
</dbReference>
<dbReference type="InterPro" id="IPR011701">
    <property type="entry name" value="MFS"/>
</dbReference>
<dbReference type="InterPro" id="IPR020846">
    <property type="entry name" value="MFS_dom"/>
</dbReference>
<dbReference type="InterPro" id="IPR036259">
    <property type="entry name" value="MFS_trans_sf"/>
</dbReference>
<dbReference type="InterPro" id="IPR023745">
    <property type="entry name" value="MFS_YcaD"/>
</dbReference>
<dbReference type="InterPro" id="IPR047200">
    <property type="entry name" value="MFS_YcaD-like"/>
</dbReference>
<dbReference type="NCBIfam" id="NF002962">
    <property type="entry name" value="PRK03633.1"/>
    <property type="match status" value="1"/>
</dbReference>
<dbReference type="PANTHER" id="PTHR23521">
    <property type="entry name" value="TRANSPORTER MFS SUPERFAMILY"/>
    <property type="match status" value="1"/>
</dbReference>
<dbReference type="PANTHER" id="PTHR23521:SF2">
    <property type="entry name" value="TRANSPORTER MFS SUPERFAMILY"/>
    <property type="match status" value="1"/>
</dbReference>
<dbReference type="Pfam" id="PF07690">
    <property type="entry name" value="MFS_1"/>
    <property type="match status" value="1"/>
</dbReference>
<dbReference type="SUPFAM" id="SSF103473">
    <property type="entry name" value="MFS general substrate transporter"/>
    <property type="match status" value="1"/>
</dbReference>
<dbReference type="PROSITE" id="PS50850">
    <property type="entry name" value="MFS"/>
    <property type="match status" value="1"/>
</dbReference>